<accession>Q130C9</accession>
<dbReference type="EMBL" id="CP000283">
    <property type="protein sequence ID" value="ABE41560.1"/>
    <property type="molecule type" value="Genomic_DNA"/>
</dbReference>
<dbReference type="SMR" id="Q130C9"/>
<dbReference type="STRING" id="316057.RPD_4343"/>
<dbReference type="KEGG" id="rpd:RPD_4343"/>
<dbReference type="eggNOG" id="COG0254">
    <property type="taxonomic scope" value="Bacteria"/>
</dbReference>
<dbReference type="HOGENOM" id="CLU_114306_3_2_5"/>
<dbReference type="BioCyc" id="RPAL316057:RPD_RS21850-MONOMER"/>
<dbReference type="Proteomes" id="UP000001818">
    <property type="component" value="Chromosome"/>
</dbReference>
<dbReference type="GO" id="GO:1990904">
    <property type="term" value="C:ribonucleoprotein complex"/>
    <property type="evidence" value="ECO:0007669"/>
    <property type="project" value="UniProtKB-KW"/>
</dbReference>
<dbReference type="GO" id="GO:0005840">
    <property type="term" value="C:ribosome"/>
    <property type="evidence" value="ECO:0007669"/>
    <property type="project" value="UniProtKB-KW"/>
</dbReference>
<dbReference type="GO" id="GO:0019843">
    <property type="term" value="F:rRNA binding"/>
    <property type="evidence" value="ECO:0007669"/>
    <property type="project" value="UniProtKB-KW"/>
</dbReference>
<dbReference type="GO" id="GO:0003735">
    <property type="term" value="F:structural constituent of ribosome"/>
    <property type="evidence" value="ECO:0007669"/>
    <property type="project" value="InterPro"/>
</dbReference>
<dbReference type="GO" id="GO:0006412">
    <property type="term" value="P:translation"/>
    <property type="evidence" value="ECO:0007669"/>
    <property type="project" value="UniProtKB-UniRule"/>
</dbReference>
<dbReference type="Gene3D" id="4.10.830.30">
    <property type="entry name" value="Ribosomal protein L31"/>
    <property type="match status" value="1"/>
</dbReference>
<dbReference type="HAMAP" id="MF_00501">
    <property type="entry name" value="Ribosomal_bL31_1"/>
    <property type="match status" value="1"/>
</dbReference>
<dbReference type="InterPro" id="IPR034704">
    <property type="entry name" value="Ribosomal_bL28/bL31-like_sf"/>
</dbReference>
<dbReference type="InterPro" id="IPR002150">
    <property type="entry name" value="Ribosomal_bL31"/>
</dbReference>
<dbReference type="InterPro" id="IPR027491">
    <property type="entry name" value="Ribosomal_bL31_A"/>
</dbReference>
<dbReference type="InterPro" id="IPR042105">
    <property type="entry name" value="Ribosomal_bL31_sf"/>
</dbReference>
<dbReference type="NCBIfam" id="TIGR00105">
    <property type="entry name" value="L31"/>
    <property type="match status" value="1"/>
</dbReference>
<dbReference type="NCBIfam" id="NF001809">
    <property type="entry name" value="PRK00528.1"/>
    <property type="match status" value="1"/>
</dbReference>
<dbReference type="PANTHER" id="PTHR33280">
    <property type="entry name" value="50S RIBOSOMAL PROTEIN L31, CHLOROPLASTIC"/>
    <property type="match status" value="1"/>
</dbReference>
<dbReference type="PANTHER" id="PTHR33280:SF6">
    <property type="entry name" value="LARGE RIBOSOMAL SUBUNIT PROTEIN BL31A"/>
    <property type="match status" value="1"/>
</dbReference>
<dbReference type="Pfam" id="PF01197">
    <property type="entry name" value="Ribosomal_L31"/>
    <property type="match status" value="1"/>
</dbReference>
<dbReference type="PRINTS" id="PR01249">
    <property type="entry name" value="RIBOSOMALL31"/>
</dbReference>
<dbReference type="SUPFAM" id="SSF143800">
    <property type="entry name" value="L28p-like"/>
    <property type="match status" value="1"/>
</dbReference>
<dbReference type="PROSITE" id="PS01143">
    <property type="entry name" value="RIBOSOMAL_L31"/>
    <property type="match status" value="1"/>
</dbReference>
<organism>
    <name type="scientific">Rhodopseudomonas palustris (strain BisB5)</name>
    <dbReference type="NCBI Taxonomy" id="316057"/>
    <lineage>
        <taxon>Bacteria</taxon>
        <taxon>Pseudomonadati</taxon>
        <taxon>Pseudomonadota</taxon>
        <taxon>Alphaproteobacteria</taxon>
        <taxon>Hyphomicrobiales</taxon>
        <taxon>Nitrobacteraceae</taxon>
        <taxon>Rhodopseudomonas</taxon>
    </lineage>
</organism>
<name>RL31_RHOPS</name>
<proteinExistence type="inferred from homology"/>
<sequence length="75" mass="8581">MKTEIHPNYHSITVVMTDGTEYQTRSTWGKEGDKLNLDIDPRSHPAWTGGTQQVLDRGGRVSRFQKKFSGFLKKD</sequence>
<feature type="chain" id="PRO_1000126709" description="Large ribosomal subunit protein bL31">
    <location>
        <begin position="1"/>
        <end position="75"/>
    </location>
</feature>
<keyword id="KW-0687">Ribonucleoprotein</keyword>
<keyword id="KW-0689">Ribosomal protein</keyword>
<keyword id="KW-0694">RNA-binding</keyword>
<keyword id="KW-0699">rRNA-binding</keyword>
<comment type="function">
    <text evidence="1">Binds the 23S rRNA.</text>
</comment>
<comment type="subunit">
    <text evidence="1">Part of the 50S ribosomal subunit.</text>
</comment>
<comment type="similarity">
    <text evidence="1">Belongs to the bacterial ribosomal protein bL31 family. Type A subfamily.</text>
</comment>
<reference key="1">
    <citation type="submission" date="2006-03" db="EMBL/GenBank/DDBJ databases">
        <title>Complete sequence of Rhodopseudomonas palustris BisB5.</title>
        <authorList>
            <consortium name="US DOE Joint Genome Institute"/>
            <person name="Copeland A."/>
            <person name="Lucas S."/>
            <person name="Lapidus A."/>
            <person name="Barry K."/>
            <person name="Detter J.C."/>
            <person name="Glavina del Rio T."/>
            <person name="Hammon N."/>
            <person name="Israni S."/>
            <person name="Dalin E."/>
            <person name="Tice H."/>
            <person name="Pitluck S."/>
            <person name="Chain P."/>
            <person name="Malfatti S."/>
            <person name="Shin M."/>
            <person name="Vergez L."/>
            <person name="Schmutz J."/>
            <person name="Larimer F."/>
            <person name="Land M."/>
            <person name="Hauser L."/>
            <person name="Pelletier D.A."/>
            <person name="Kyrpides N."/>
            <person name="Lykidis A."/>
            <person name="Oda Y."/>
            <person name="Harwood C.S."/>
            <person name="Richardson P."/>
        </authorList>
    </citation>
    <scope>NUCLEOTIDE SEQUENCE [LARGE SCALE GENOMIC DNA]</scope>
    <source>
        <strain>BisB5</strain>
    </source>
</reference>
<gene>
    <name evidence="1" type="primary">rpmE</name>
    <name type="ordered locus">RPD_4343</name>
</gene>
<protein>
    <recommendedName>
        <fullName evidence="1">Large ribosomal subunit protein bL31</fullName>
    </recommendedName>
    <alternativeName>
        <fullName evidence="2">50S ribosomal protein L31</fullName>
    </alternativeName>
</protein>
<evidence type="ECO:0000255" key="1">
    <source>
        <dbReference type="HAMAP-Rule" id="MF_00501"/>
    </source>
</evidence>
<evidence type="ECO:0000305" key="2"/>